<keyword id="KW-0150">Chloroplast</keyword>
<keyword id="KW-0472">Membrane</keyword>
<keyword id="KW-0520">NAD</keyword>
<keyword id="KW-0521">NADP</keyword>
<keyword id="KW-0934">Plastid</keyword>
<keyword id="KW-0618">Plastoquinone</keyword>
<keyword id="KW-0874">Quinone</keyword>
<keyword id="KW-1185">Reference proteome</keyword>
<keyword id="KW-0793">Thylakoid</keyword>
<keyword id="KW-1278">Translocase</keyword>
<keyword id="KW-0812">Transmembrane</keyword>
<keyword id="KW-1133">Transmembrane helix</keyword>
<keyword id="KW-0813">Transport</keyword>
<gene>
    <name evidence="1" type="primary">ndhE</name>
</gene>
<name>NU4LC_CICAR</name>
<protein>
    <recommendedName>
        <fullName evidence="1">NAD(P)H-quinone oxidoreductase subunit 4L, chloroplastic</fullName>
        <ecNumber evidence="1">7.1.1.-</ecNumber>
    </recommendedName>
    <alternativeName>
        <fullName evidence="1">NAD(P)H dehydrogenase subunit 4L</fullName>
    </alternativeName>
    <alternativeName>
        <fullName evidence="1">NADH-plastoquinone oxidoreductase subunit 4L</fullName>
    </alternativeName>
</protein>
<reference key="1">
    <citation type="journal article" date="2008" name="Mol. Phylogenet. Evol.">
        <title>Complete plastid genome sequence of the chickpea (Cicer arietinum) and the phylogenetic distribution of rps12 and clpP intron losses among legumes (Leguminosae).</title>
        <authorList>
            <person name="Jansen R.K."/>
            <person name="Wojciechowski M.F."/>
            <person name="Sanniyasi E."/>
            <person name="Lee S.-B."/>
            <person name="Daniell H."/>
        </authorList>
    </citation>
    <scope>NUCLEOTIDE SEQUENCE [LARGE SCALE GENOMIC DNA]</scope>
</reference>
<evidence type="ECO:0000255" key="1">
    <source>
        <dbReference type="HAMAP-Rule" id="MF_01456"/>
    </source>
</evidence>
<organism>
    <name type="scientific">Cicer arietinum</name>
    <name type="common">Chickpea</name>
    <name type="synonym">Garbanzo</name>
    <dbReference type="NCBI Taxonomy" id="3827"/>
    <lineage>
        <taxon>Eukaryota</taxon>
        <taxon>Viridiplantae</taxon>
        <taxon>Streptophyta</taxon>
        <taxon>Embryophyta</taxon>
        <taxon>Tracheophyta</taxon>
        <taxon>Spermatophyta</taxon>
        <taxon>Magnoliopsida</taxon>
        <taxon>eudicotyledons</taxon>
        <taxon>Gunneridae</taxon>
        <taxon>Pentapetalae</taxon>
        <taxon>rosids</taxon>
        <taxon>fabids</taxon>
        <taxon>Fabales</taxon>
        <taxon>Fabaceae</taxon>
        <taxon>Papilionoideae</taxon>
        <taxon>50 kb inversion clade</taxon>
        <taxon>NPAAA clade</taxon>
        <taxon>Hologalegina</taxon>
        <taxon>IRL clade</taxon>
        <taxon>Cicereae</taxon>
        <taxon>Cicer</taxon>
    </lineage>
</organism>
<dbReference type="EC" id="7.1.1.-" evidence="1"/>
<dbReference type="EMBL" id="EU835853">
    <property type="protein sequence ID" value="ACH41121.1"/>
    <property type="molecule type" value="Genomic_DNA"/>
</dbReference>
<dbReference type="RefSeq" id="YP_002149783.1">
    <property type="nucleotide sequence ID" value="NC_011163.1"/>
</dbReference>
<dbReference type="SMR" id="B5LMS4"/>
<dbReference type="GeneID" id="6797541"/>
<dbReference type="KEGG" id="cam:6797541"/>
<dbReference type="OrthoDB" id="1925110at2759"/>
<dbReference type="Proteomes" id="UP000087171">
    <property type="component" value="Chloroplast Pltd"/>
</dbReference>
<dbReference type="GO" id="GO:0009535">
    <property type="term" value="C:chloroplast thylakoid membrane"/>
    <property type="evidence" value="ECO:0007669"/>
    <property type="project" value="UniProtKB-SubCell"/>
</dbReference>
<dbReference type="GO" id="GO:0030964">
    <property type="term" value="C:NADH dehydrogenase complex"/>
    <property type="evidence" value="ECO:0007669"/>
    <property type="project" value="TreeGrafter"/>
</dbReference>
<dbReference type="GO" id="GO:0016655">
    <property type="term" value="F:oxidoreductase activity, acting on NAD(P)H, quinone or similar compound as acceptor"/>
    <property type="evidence" value="ECO:0007669"/>
    <property type="project" value="UniProtKB-UniRule"/>
</dbReference>
<dbReference type="GO" id="GO:0048038">
    <property type="term" value="F:quinone binding"/>
    <property type="evidence" value="ECO:0007669"/>
    <property type="project" value="UniProtKB-KW"/>
</dbReference>
<dbReference type="GO" id="GO:0042773">
    <property type="term" value="P:ATP synthesis coupled electron transport"/>
    <property type="evidence" value="ECO:0007669"/>
    <property type="project" value="InterPro"/>
</dbReference>
<dbReference type="GO" id="GO:0019684">
    <property type="term" value="P:photosynthesis, light reaction"/>
    <property type="evidence" value="ECO:0007669"/>
    <property type="project" value="UniProtKB-UniRule"/>
</dbReference>
<dbReference type="FunFam" id="1.10.287.3510:FF:000001">
    <property type="entry name" value="NADH-quinone oxidoreductase subunit K"/>
    <property type="match status" value="1"/>
</dbReference>
<dbReference type="Gene3D" id="1.10.287.3510">
    <property type="match status" value="1"/>
</dbReference>
<dbReference type="HAMAP" id="MF_01456">
    <property type="entry name" value="NDH1_NuoK"/>
    <property type="match status" value="1"/>
</dbReference>
<dbReference type="InterPro" id="IPR001133">
    <property type="entry name" value="NADH_UbQ_OxRdtase_chain4L/K"/>
</dbReference>
<dbReference type="InterPro" id="IPR039428">
    <property type="entry name" value="NUOK/Mnh_C1-like"/>
</dbReference>
<dbReference type="NCBIfam" id="NF004320">
    <property type="entry name" value="PRK05715.1-2"/>
    <property type="match status" value="1"/>
</dbReference>
<dbReference type="NCBIfam" id="NF004322">
    <property type="entry name" value="PRK05715.1-4"/>
    <property type="match status" value="1"/>
</dbReference>
<dbReference type="NCBIfam" id="NF004323">
    <property type="entry name" value="PRK05715.1-5"/>
    <property type="match status" value="1"/>
</dbReference>
<dbReference type="PANTHER" id="PTHR11434:SF16">
    <property type="entry name" value="NADH-UBIQUINONE OXIDOREDUCTASE CHAIN 4L"/>
    <property type="match status" value="1"/>
</dbReference>
<dbReference type="PANTHER" id="PTHR11434">
    <property type="entry name" value="NADH-UBIQUINONE OXIDOREDUCTASE SUBUNIT ND4L"/>
    <property type="match status" value="1"/>
</dbReference>
<dbReference type="Pfam" id="PF00420">
    <property type="entry name" value="Oxidored_q2"/>
    <property type="match status" value="1"/>
</dbReference>
<geneLocation type="chloroplast"/>
<comment type="function">
    <text evidence="1">NDH shuttles electrons from NAD(P)H:plastoquinone, via FMN and iron-sulfur (Fe-S) centers, to quinones in the photosynthetic chain and possibly in a chloroplast respiratory chain. The immediate electron acceptor for the enzyme in this species is believed to be plastoquinone. Couples the redox reaction to proton translocation, and thus conserves the redox energy in a proton gradient.</text>
</comment>
<comment type="catalytic activity">
    <reaction evidence="1">
        <text>a plastoquinone + NADH + (n+1) H(+)(in) = a plastoquinol + NAD(+) + n H(+)(out)</text>
        <dbReference type="Rhea" id="RHEA:42608"/>
        <dbReference type="Rhea" id="RHEA-COMP:9561"/>
        <dbReference type="Rhea" id="RHEA-COMP:9562"/>
        <dbReference type="ChEBI" id="CHEBI:15378"/>
        <dbReference type="ChEBI" id="CHEBI:17757"/>
        <dbReference type="ChEBI" id="CHEBI:57540"/>
        <dbReference type="ChEBI" id="CHEBI:57945"/>
        <dbReference type="ChEBI" id="CHEBI:62192"/>
    </reaction>
</comment>
<comment type="catalytic activity">
    <reaction evidence="1">
        <text>a plastoquinone + NADPH + (n+1) H(+)(in) = a plastoquinol + NADP(+) + n H(+)(out)</text>
        <dbReference type="Rhea" id="RHEA:42612"/>
        <dbReference type="Rhea" id="RHEA-COMP:9561"/>
        <dbReference type="Rhea" id="RHEA-COMP:9562"/>
        <dbReference type="ChEBI" id="CHEBI:15378"/>
        <dbReference type="ChEBI" id="CHEBI:17757"/>
        <dbReference type="ChEBI" id="CHEBI:57783"/>
        <dbReference type="ChEBI" id="CHEBI:58349"/>
        <dbReference type="ChEBI" id="CHEBI:62192"/>
    </reaction>
</comment>
<comment type="subunit">
    <text evidence="1">NDH is composed of at least 16 different subunits, 5 of which are encoded in the nucleus.</text>
</comment>
<comment type="subcellular location">
    <subcellularLocation>
        <location evidence="1">Plastid</location>
        <location evidence="1">Chloroplast thylakoid membrane</location>
        <topology evidence="1">Multi-pass membrane protein</topology>
    </subcellularLocation>
</comment>
<comment type="similarity">
    <text evidence="1">Belongs to the complex I subunit 4L family.</text>
</comment>
<sequence length="101" mass="11267">MMLEHVLVLSAYLFSIGIYGLITSRNMVRALMCLELILNAVNINLVTFSDFFDNRQLKGNIFSIFVIAIAAAEAAIGLAIVSSIYRNRKSTRINQSNLLNK</sequence>
<accession>B5LMS4</accession>
<proteinExistence type="inferred from homology"/>
<feature type="chain" id="PRO_0000360317" description="NAD(P)H-quinone oxidoreductase subunit 4L, chloroplastic">
    <location>
        <begin position="1"/>
        <end position="101"/>
    </location>
</feature>
<feature type="transmembrane region" description="Helical" evidence="1">
    <location>
        <begin position="2"/>
        <end position="22"/>
    </location>
</feature>
<feature type="transmembrane region" description="Helical" evidence="1">
    <location>
        <begin position="32"/>
        <end position="52"/>
    </location>
</feature>
<feature type="transmembrane region" description="Helical" evidence="1">
    <location>
        <begin position="61"/>
        <end position="81"/>
    </location>
</feature>